<reference key="1">
    <citation type="journal article" date="2011" name="PLoS Genet.">
        <title>Genomic analysis of the necrotrophic fungal pathogens Sclerotinia sclerotiorum and Botrytis cinerea.</title>
        <authorList>
            <person name="Amselem J."/>
            <person name="Cuomo C.A."/>
            <person name="van Kan J.A.L."/>
            <person name="Viaud M."/>
            <person name="Benito E.P."/>
            <person name="Couloux A."/>
            <person name="Coutinho P.M."/>
            <person name="de Vries R.P."/>
            <person name="Dyer P.S."/>
            <person name="Fillinger S."/>
            <person name="Fournier E."/>
            <person name="Gout L."/>
            <person name="Hahn M."/>
            <person name="Kohn L."/>
            <person name="Lapalu N."/>
            <person name="Plummer K.M."/>
            <person name="Pradier J.-M."/>
            <person name="Quevillon E."/>
            <person name="Sharon A."/>
            <person name="Simon A."/>
            <person name="ten Have A."/>
            <person name="Tudzynski B."/>
            <person name="Tudzynski P."/>
            <person name="Wincker P."/>
            <person name="Andrew M."/>
            <person name="Anthouard V."/>
            <person name="Beever R.E."/>
            <person name="Beffa R."/>
            <person name="Benoit I."/>
            <person name="Bouzid O."/>
            <person name="Brault B."/>
            <person name="Chen Z."/>
            <person name="Choquer M."/>
            <person name="Collemare J."/>
            <person name="Cotton P."/>
            <person name="Danchin E.G."/>
            <person name="Da Silva C."/>
            <person name="Gautier A."/>
            <person name="Giraud C."/>
            <person name="Giraud T."/>
            <person name="Gonzalez C."/>
            <person name="Grossetete S."/>
            <person name="Gueldener U."/>
            <person name="Henrissat B."/>
            <person name="Howlett B.J."/>
            <person name="Kodira C."/>
            <person name="Kretschmer M."/>
            <person name="Lappartient A."/>
            <person name="Leroch M."/>
            <person name="Levis C."/>
            <person name="Mauceli E."/>
            <person name="Neuveglise C."/>
            <person name="Oeser B."/>
            <person name="Pearson M."/>
            <person name="Poulain J."/>
            <person name="Poussereau N."/>
            <person name="Quesneville H."/>
            <person name="Rascle C."/>
            <person name="Schumacher J."/>
            <person name="Segurens B."/>
            <person name="Sexton A."/>
            <person name="Silva E."/>
            <person name="Sirven C."/>
            <person name="Soanes D.M."/>
            <person name="Talbot N.J."/>
            <person name="Templeton M."/>
            <person name="Yandava C."/>
            <person name="Yarden O."/>
            <person name="Zeng Q."/>
            <person name="Rollins J.A."/>
            <person name="Lebrun M.-H."/>
            <person name="Dickman M."/>
        </authorList>
    </citation>
    <scope>NUCLEOTIDE SEQUENCE [LARGE SCALE GENOMIC DNA]</scope>
    <source>
        <strain>ATCC 18683 / 1980 / Ss-1</strain>
    </source>
</reference>
<protein>
    <recommendedName>
        <fullName evidence="1">Small ribosomal subunit protein uS2</fullName>
    </recommendedName>
    <alternativeName>
        <fullName evidence="3">40S ribosomal protein S0</fullName>
    </alternativeName>
</protein>
<dbReference type="EMBL" id="CH476639">
    <property type="protein sequence ID" value="EDN96005.1"/>
    <property type="molecule type" value="Genomic_DNA"/>
</dbReference>
<dbReference type="RefSeq" id="XP_001587181.1">
    <property type="nucleotide sequence ID" value="XM_001587131.1"/>
</dbReference>
<dbReference type="SMR" id="A7F2R3"/>
<dbReference type="FunCoup" id="A7F2R3">
    <property type="interactions" value="1180"/>
</dbReference>
<dbReference type="STRING" id="665079.A7F2R3"/>
<dbReference type="EnsemblFungi" id="EDN96005">
    <property type="protein sequence ID" value="EDN96005"/>
    <property type="gene ID" value="SS1G_12211"/>
</dbReference>
<dbReference type="GeneID" id="5483235"/>
<dbReference type="KEGG" id="ssl:SS1G_12211"/>
<dbReference type="VEuPathDB" id="FungiDB:sscle_05g041820"/>
<dbReference type="eggNOG" id="KOG0830">
    <property type="taxonomic scope" value="Eukaryota"/>
</dbReference>
<dbReference type="HOGENOM" id="CLU_058171_0_1_1"/>
<dbReference type="InParanoid" id="A7F2R3"/>
<dbReference type="OMA" id="QCHLGAK"/>
<dbReference type="OrthoDB" id="414863at2759"/>
<dbReference type="Proteomes" id="UP000001312">
    <property type="component" value="Unassembled WGS sequence"/>
</dbReference>
<dbReference type="GO" id="GO:0022627">
    <property type="term" value="C:cytosolic small ribosomal subunit"/>
    <property type="evidence" value="ECO:0000318"/>
    <property type="project" value="GO_Central"/>
</dbReference>
<dbReference type="GO" id="GO:0003735">
    <property type="term" value="F:structural constituent of ribosome"/>
    <property type="evidence" value="ECO:0000318"/>
    <property type="project" value="GO_Central"/>
</dbReference>
<dbReference type="GO" id="GO:0002181">
    <property type="term" value="P:cytoplasmic translation"/>
    <property type="evidence" value="ECO:0000318"/>
    <property type="project" value="GO_Central"/>
</dbReference>
<dbReference type="GO" id="GO:0000028">
    <property type="term" value="P:ribosomal small subunit assembly"/>
    <property type="evidence" value="ECO:0000318"/>
    <property type="project" value="GO_Central"/>
</dbReference>
<dbReference type="CDD" id="cd01425">
    <property type="entry name" value="RPS2"/>
    <property type="match status" value="1"/>
</dbReference>
<dbReference type="FunFam" id="3.40.50.10490:FF:000010">
    <property type="entry name" value="40S ribosomal protein S0"/>
    <property type="match status" value="1"/>
</dbReference>
<dbReference type="Gene3D" id="3.40.50.10490">
    <property type="entry name" value="Glucose-6-phosphate isomerase like protein, domain 1"/>
    <property type="match status" value="1"/>
</dbReference>
<dbReference type="HAMAP" id="MF_03015">
    <property type="entry name" value="Ribosomal_S2_euk"/>
    <property type="match status" value="1"/>
</dbReference>
<dbReference type="InterPro" id="IPR001865">
    <property type="entry name" value="Ribosomal_uS2"/>
</dbReference>
<dbReference type="InterPro" id="IPR032281">
    <property type="entry name" value="Ribosomal_uS2_C"/>
</dbReference>
<dbReference type="InterPro" id="IPR018130">
    <property type="entry name" value="Ribosomal_uS2_CS"/>
</dbReference>
<dbReference type="InterPro" id="IPR027498">
    <property type="entry name" value="Ribosomal_uS2_euk"/>
</dbReference>
<dbReference type="InterPro" id="IPR005707">
    <property type="entry name" value="Ribosomal_uS2_euk/arc"/>
</dbReference>
<dbReference type="InterPro" id="IPR023591">
    <property type="entry name" value="Ribosomal_uS2_flav_dom_sf"/>
</dbReference>
<dbReference type="NCBIfam" id="TIGR01012">
    <property type="entry name" value="uS2_euk_arch"/>
    <property type="match status" value="1"/>
</dbReference>
<dbReference type="PANTHER" id="PTHR11489">
    <property type="entry name" value="40S RIBOSOMAL PROTEIN SA"/>
    <property type="match status" value="1"/>
</dbReference>
<dbReference type="Pfam" id="PF16122">
    <property type="entry name" value="40S_SA_C"/>
    <property type="match status" value="1"/>
</dbReference>
<dbReference type="Pfam" id="PF00318">
    <property type="entry name" value="Ribosomal_S2"/>
    <property type="match status" value="2"/>
</dbReference>
<dbReference type="PRINTS" id="PR00395">
    <property type="entry name" value="RIBOSOMALS2"/>
</dbReference>
<dbReference type="SUPFAM" id="SSF52313">
    <property type="entry name" value="Ribosomal protein S2"/>
    <property type="match status" value="1"/>
</dbReference>
<dbReference type="PROSITE" id="PS00963">
    <property type="entry name" value="RIBOSOMAL_S2_2"/>
    <property type="match status" value="1"/>
</dbReference>
<keyword id="KW-0963">Cytoplasm</keyword>
<keyword id="KW-1185">Reference proteome</keyword>
<keyword id="KW-0687">Ribonucleoprotein</keyword>
<keyword id="KW-0689">Ribosomal protein</keyword>
<name>RSSA_SCLS1</name>
<sequence>MAPSQLPAIFNPTSQDIEQLLAAQCHLGSKNLQVHMEPYLWKTRPDGINVINIGKTWEKIVLAARIIAAIDNPADICVISARPYGQRAVLKFAAHTGAVAIAGRFTPGNFTNYITRSFKEPRLIIVTDPRTDAQAIKEASYVNIPVIALCDTDSPTEFVDVAIPTNNKGRHSIGLVWWMLAREVLRLRGSIASREAEWDTMVDLYFYRDPEAEENKDAIEEAKAPGADEVGAAAVDQGFAGTGDWEVSGATAGAFTAASNTAAAGGASWDAAEPSDWAATPAAAGQEWAASGATEQW</sequence>
<comment type="function">
    <text evidence="1">Required for the assembly and/or stability of the 40S ribosomal subunit. Required for the processing of the 20S rRNA-precursor to mature 18S rRNA in a late step of the maturation of 40S ribosomal subunits.</text>
</comment>
<comment type="subunit">
    <text evidence="1">Component of the small ribosomal subunit. Mature ribosomes consist of a small (40S) and a large (60S) subunit. The 40S subunit contains about 33 different proteins and 1 molecule of RNA (18S). The 60S subunit contains about 49 different proteins and 3 molecules of RNA (25S, 5.8S and 5S). Interacts with rps21.</text>
</comment>
<comment type="subcellular location">
    <subcellularLocation>
        <location evidence="1">Cytoplasm</location>
    </subcellularLocation>
</comment>
<comment type="similarity">
    <text evidence="1">Belongs to the universal ribosomal protein uS2 family.</text>
</comment>
<feature type="chain" id="PRO_0000371649" description="Small ribosomal subunit protein uS2">
    <location>
        <begin position="1"/>
        <end position="297"/>
    </location>
</feature>
<feature type="region of interest" description="Disordered" evidence="2">
    <location>
        <begin position="266"/>
        <end position="297"/>
    </location>
</feature>
<feature type="compositionally biased region" description="Low complexity" evidence="2">
    <location>
        <begin position="282"/>
        <end position="297"/>
    </location>
</feature>
<proteinExistence type="inferred from homology"/>
<organism>
    <name type="scientific">Sclerotinia sclerotiorum (strain ATCC 18683 / 1980 / Ss-1)</name>
    <name type="common">White mold</name>
    <name type="synonym">Whetzelinia sclerotiorum</name>
    <dbReference type="NCBI Taxonomy" id="665079"/>
    <lineage>
        <taxon>Eukaryota</taxon>
        <taxon>Fungi</taxon>
        <taxon>Dikarya</taxon>
        <taxon>Ascomycota</taxon>
        <taxon>Pezizomycotina</taxon>
        <taxon>Leotiomycetes</taxon>
        <taxon>Helotiales</taxon>
        <taxon>Sclerotiniaceae</taxon>
        <taxon>Sclerotinia</taxon>
    </lineage>
</organism>
<evidence type="ECO:0000255" key="1">
    <source>
        <dbReference type="HAMAP-Rule" id="MF_03015"/>
    </source>
</evidence>
<evidence type="ECO:0000256" key="2">
    <source>
        <dbReference type="SAM" id="MobiDB-lite"/>
    </source>
</evidence>
<evidence type="ECO:0000305" key="3"/>
<gene>
    <name type="primary">rps0</name>
    <name type="ORF">SS1G_12211</name>
</gene>
<accession>A7F2R3</accession>